<keyword id="KW-0066">ATP synthesis</keyword>
<keyword id="KW-0067">ATP-binding</keyword>
<keyword id="KW-0997">Cell inner membrane</keyword>
<keyword id="KW-1003">Cell membrane</keyword>
<keyword id="KW-0139">CF(1)</keyword>
<keyword id="KW-0375">Hydrogen ion transport</keyword>
<keyword id="KW-0406">Ion transport</keyword>
<keyword id="KW-0472">Membrane</keyword>
<keyword id="KW-0547">Nucleotide-binding</keyword>
<keyword id="KW-1278">Translocase</keyword>
<keyword id="KW-0813">Transport</keyword>
<proteinExistence type="inferred from homology"/>
<reference key="1">
    <citation type="submission" date="2008-01" db="EMBL/GenBank/DDBJ databases">
        <title>Complete sequence of chromosome of Caulobacter sp. K31.</title>
        <authorList>
            <consortium name="US DOE Joint Genome Institute"/>
            <person name="Copeland A."/>
            <person name="Lucas S."/>
            <person name="Lapidus A."/>
            <person name="Barry K."/>
            <person name="Glavina del Rio T."/>
            <person name="Dalin E."/>
            <person name="Tice H."/>
            <person name="Pitluck S."/>
            <person name="Bruce D."/>
            <person name="Goodwin L."/>
            <person name="Thompson L.S."/>
            <person name="Brettin T."/>
            <person name="Detter J.C."/>
            <person name="Han C."/>
            <person name="Schmutz J."/>
            <person name="Larimer F."/>
            <person name="Land M."/>
            <person name="Hauser L."/>
            <person name="Kyrpides N."/>
            <person name="Kim E."/>
            <person name="Stephens C."/>
            <person name="Richardson P."/>
        </authorList>
    </citation>
    <scope>NUCLEOTIDE SEQUENCE [LARGE SCALE GENOMIC DNA]</scope>
    <source>
        <strain>K31</strain>
    </source>
</reference>
<feature type="chain" id="PRO_0000339510" description="ATP synthase subunit beta">
    <location>
        <begin position="1"/>
        <end position="542"/>
    </location>
</feature>
<feature type="region of interest" description="Disordered" evidence="2">
    <location>
        <begin position="1"/>
        <end position="61"/>
    </location>
</feature>
<feature type="compositionally biased region" description="Low complexity" evidence="2">
    <location>
        <begin position="1"/>
        <end position="50"/>
    </location>
</feature>
<feature type="binding site" evidence="1">
    <location>
        <begin position="216"/>
        <end position="223"/>
    </location>
    <ligand>
        <name>ATP</name>
        <dbReference type="ChEBI" id="CHEBI:30616"/>
    </ligand>
</feature>
<name>ATPB_CAUSK</name>
<dbReference type="EC" id="7.1.2.2" evidence="1"/>
<dbReference type="EMBL" id="CP000927">
    <property type="protein sequence ID" value="ABZ73857.1"/>
    <property type="molecule type" value="Genomic_DNA"/>
</dbReference>
<dbReference type="SMR" id="B0T335"/>
<dbReference type="STRING" id="366602.Caul_4737"/>
<dbReference type="KEGG" id="cak:Caul_4737"/>
<dbReference type="eggNOG" id="COG0055">
    <property type="taxonomic scope" value="Bacteria"/>
</dbReference>
<dbReference type="HOGENOM" id="CLU_022398_0_2_5"/>
<dbReference type="OrthoDB" id="9801639at2"/>
<dbReference type="GO" id="GO:0005886">
    <property type="term" value="C:plasma membrane"/>
    <property type="evidence" value="ECO:0007669"/>
    <property type="project" value="UniProtKB-SubCell"/>
</dbReference>
<dbReference type="GO" id="GO:0045259">
    <property type="term" value="C:proton-transporting ATP synthase complex"/>
    <property type="evidence" value="ECO:0007669"/>
    <property type="project" value="UniProtKB-KW"/>
</dbReference>
<dbReference type="GO" id="GO:0005524">
    <property type="term" value="F:ATP binding"/>
    <property type="evidence" value="ECO:0007669"/>
    <property type="project" value="UniProtKB-UniRule"/>
</dbReference>
<dbReference type="GO" id="GO:0016887">
    <property type="term" value="F:ATP hydrolysis activity"/>
    <property type="evidence" value="ECO:0007669"/>
    <property type="project" value="InterPro"/>
</dbReference>
<dbReference type="GO" id="GO:0046933">
    <property type="term" value="F:proton-transporting ATP synthase activity, rotational mechanism"/>
    <property type="evidence" value="ECO:0007669"/>
    <property type="project" value="UniProtKB-UniRule"/>
</dbReference>
<dbReference type="CDD" id="cd18110">
    <property type="entry name" value="ATP-synt_F1_beta_C"/>
    <property type="match status" value="1"/>
</dbReference>
<dbReference type="CDD" id="cd18115">
    <property type="entry name" value="ATP-synt_F1_beta_N"/>
    <property type="match status" value="1"/>
</dbReference>
<dbReference type="CDD" id="cd01133">
    <property type="entry name" value="F1-ATPase_beta_CD"/>
    <property type="match status" value="1"/>
</dbReference>
<dbReference type="FunFam" id="1.10.1140.10:FF:000001">
    <property type="entry name" value="ATP synthase subunit beta"/>
    <property type="match status" value="1"/>
</dbReference>
<dbReference type="FunFam" id="3.40.50.300:FF:000026">
    <property type="entry name" value="ATP synthase subunit beta"/>
    <property type="match status" value="1"/>
</dbReference>
<dbReference type="Gene3D" id="2.40.10.170">
    <property type="match status" value="1"/>
</dbReference>
<dbReference type="Gene3D" id="1.10.1140.10">
    <property type="entry name" value="Bovine Mitochondrial F1-atpase, Atp Synthase Beta Chain, Chain D, domain 3"/>
    <property type="match status" value="1"/>
</dbReference>
<dbReference type="Gene3D" id="3.40.50.300">
    <property type="entry name" value="P-loop containing nucleotide triphosphate hydrolases"/>
    <property type="match status" value="1"/>
</dbReference>
<dbReference type="HAMAP" id="MF_01347">
    <property type="entry name" value="ATP_synth_beta_bact"/>
    <property type="match status" value="1"/>
</dbReference>
<dbReference type="InterPro" id="IPR003593">
    <property type="entry name" value="AAA+_ATPase"/>
</dbReference>
<dbReference type="InterPro" id="IPR055190">
    <property type="entry name" value="ATP-synt_VA_C"/>
</dbReference>
<dbReference type="InterPro" id="IPR005722">
    <property type="entry name" value="ATP_synth_F1_bsu"/>
</dbReference>
<dbReference type="InterPro" id="IPR020003">
    <property type="entry name" value="ATPase_a/bsu_AS"/>
</dbReference>
<dbReference type="InterPro" id="IPR050053">
    <property type="entry name" value="ATPase_alpha/beta_chains"/>
</dbReference>
<dbReference type="InterPro" id="IPR004100">
    <property type="entry name" value="ATPase_F1/V1/A1_a/bsu_N"/>
</dbReference>
<dbReference type="InterPro" id="IPR036121">
    <property type="entry name" value="ATPase_F1/V1/A1_a/bsu_N_sf"/>
</dbReference>
<dbReference type="InterPro" id="IPR000194">
    <property type="entry name" value="ATPase_F1/V1/A1_a/bsu_nucl-bd"/>
</dbReference>
<dbReference type="InterPro" id="IPR024034">
    <property type="entry name" value="ATPase_F1/V1_b/a_C"/>
</dbReference>
<dbReference type="InterPro" id="IPR027417">
    <property type="entry name" value="P-loop_NTPase"/>
</dbReference>
<dbReference type="NCBIfam" id="TIGR01039">
    <property type="entry name" value="atpD"/>
    <property type="match status" value="1"/>
</dbReference>
<dbReference type="PANTHER" id="PTHR15184">
    <property type="entry name" value="ATP SYNTHASE"/>
    <property type="match status" value="1"/>
</dbReference>
<dbReference type="PANTHER" id="PTHR15184:SF71">
    <property type="entry name" value="ATP SYNTHASE SUBUNIT BETA, MITOCHONDRIAL"/>
    <property type="match status" value="1"/>
</dbReference>
<dbReference type="Pfam" id="PF00006">
    <property type="entry name" value="ATP-synt_ab"/>
    <property type="match status" value="1"/>
</dbReference>
<dbReference type="Pfam" id="PF02874">
    <property type="entry name" value="ATP-synt_ab_N"/>
    <property type="match status" value="1"/>
</dbReference>
<dbReference type="Pfam" id="PF22919">
    <property type="entry name" value="ATP-synt_VA_C"/>
    <property type="match status" value="1"/>
</dbReference>
<dbReference type="PIRSF" id="PIRSF039072">
    <property type="entry name" value="ATPase_subunit_beta"/>
    <property type="match status" value="1"/>
</dbReference>
<dbReference type="SMART" id="SM00382">
    <property type="entry name" value="AAA"/>
    <property type="match status" value="1"/>
</dbReference>
<dbReference type="SUPFAM" id="SSF47917">
    <property type="entry name" value="C-terminal domain of alpha and beta subunits of F1 ATP synthase"/>
    <property type="match status" value="1"/>
</dbReference>
<dbReference type="SUPFAM" id="SSF50615">
    <property type="entry name" value="N-terminal domain of alpha and beta subunits of F1 ATP synthase"/>
    <property type="match status" value="1"/>
</dbReference>
<dbReference type="SUPFAM" id="SSF52540">
    <property type="entry name" value="P-loop containing nucleoside triphosphate hydrolases"/>
    <property type="match status" value="1"/>
</dbReference>
<dbReference type="PROSITE" id="PS00152">
    <property type="entry name" value="ATPASE_ALPHA_BETA"/>
    <property type="match status" value="1"/>
</dbReference>
<evidence type="ECO:0000255" key="1">
    <source>
        <dbReference type="HAMAP-Rule" id="MF_01347"/>
    </source>
</evidence>
<evidence type="ECO:0000256" key="2">
    <source>
        <dbReference type="SAM" id="MobiDB-lite"/>
    </source>
</evidence>
<protein>
    <recommendedName>
        <fullName evidence="1">ATP synthase subunit beta</fullName>
        <ecNumber evidence="1">7.1.2.2</ecNumber>
    </recommendedName>
    <alternativeName>
        <fullName evidence="1">ATP synthase F1 sector subunit beta</fullName>
    </alternativeName>
    <alternativeName>
        <fullName evidence="1">F-ATPase subunit beta</fullName>
    </alternativeName>
</protein>
<sequence length="542" mass="57377">MAKTPAKAPAAAAKPAAVKKPAAPKAAAAPKAAAVATPAAKKPAAPKAAPVSKVAGTREKPDTIRAGTGKLVQVIGAVVDVEFTGELPAILNALETVNIATGQRLVFEVAQHLGQNTVRAIAMDATEGLVRGQEVRDTGQSIRVPVGPGTLGRIMNVIGEPIDEQGPIKSDIFRTIHRDAPTFAEQTNTAEVLVTGIKVIDLMCPYTKGGKIGLFGGAGVGKTVTMQELINNIAKAYGGYSVLAGVGERTREGNDLYHEMIESNVNVDPKINGSTEGSRCALVYGQMNEPPGARARVALTGLSIAEYFRDEEGKDVLLFVDNIFRFTQAGAEVSALLGRIPSAVGYQPTLATEMGNLQERITSTNKGSITSVQAIYVPADDLTDPAPAASFAHLDATTVLSRDIAAQAIFPAVDPLDSTSRIMDPLIIGQEHYDVARSVQEVLQQYKSLKDIIAILGMDELSEEDKLTVARARKISRFLSQPFHVAEQFTNTPGAFVSLKDTIRSFKGIVDGEYDHLPEAAFYMVGPIEEAVAKAEKLAGEA</sequence>
<gene>
    <name evidence="1" type="primary">atpD</name>
    <name type="ordered locus">Caul_4737</name>
</gene>
<organism>
    <name type="scientific">Caulobacter sp. (strain K31)</name>
    <dbReference type="NCBI Taxonomy" id="366602"/>
    <lineage>
        <taxon>Bacteria</taxon>
        <taxon>Pseudomonadati</taxon>
        <taxon>Pseudomonadota</taxon>
        <taxon>Alphaproteobacteria</taxon>
        <taxon>Caulobacterales</taxon>
        <taxon>Caulobacteraceae</taxon>
        <taxon>Caulobacter</taxon>
    </lineage>
</organism>
<accession>B0T335</accession>
<comment type="function">
    <text evidence="1">Produces ATP from ADP in the presence of a proton gradient across the membrane. The catalytic sites are hosted primarily by the beta subunits.</text>
</comment>
<comment type="catalytic activity">
    <reaction evidence="1">
        <text>ATP + H2O + 4 H(+)(in) = ADP + phosphate + 5 H(+)(out)</text>
        <dbReference type="Rhea" id="RHEA:57720"/>
        <dbReference type="ChEBI" id="CHEBI:15377"/>
        <dbReference type="ChEBI" id="CHEBI:15378"/>
        <dbReference type="ChEBI" id="CHEBI:30616"/>
        <dbReference type="ChEBI" id="CHEBI:43474"/>
        <dbReference type="ChEBI" id="CHEBI:456216"/>
        <dbReference type="EC" id="7.1.2.2"/>
    </reaction>
</comment>
<comment type="subunit">
    <text evidence="1">F-type ATPases have 2 components, CF(1) - the catalytic core - and CF(0) - the membrane proton channel. CF(1) has five subunits: alpha(3), beta(3), gamma(1), delta(1), epsilon(1). CF(0) has three main subunits: a(1), b(2) and c(9-12). The alpha and beta chains form an alternating ring which encloses part of the gamma chain. CF(1) is attached to CF(0) by a central stalk formed by the gamma and epsilon chains, while a peripheral stalk is formed by the delta and b chains.</text>
</comment>
<comment type="subcellular location">
    <subcellularLocation>
        <location evidence="1">Cell inner membrane</location>
        <topology evidence="1">Peripheral membrane protein</topology>
    </subcellularLocation>
</comment>
<comment type="similarity">
    <text evidence="1">Belongs to the ATPase alpha/beta chains family.</text>
</comment>